<name>RS19_METST</name>
<keyword id="KW-1185">Reference proteome</keyword>
<keyword id="KW-0687">Ribonucleoprotein</keyword>
<keyword id="KW-0689">Ribosomal protein</keyword>
<keyword id="KW-0694">RNA-binding</keyword>
<keyword id="KW-0699">rRNA-binding</keyword>
<evidence type="ECO:0000255" key="1">
    <source>
        <dbReference type="HAMAP-Rule" id="MF_00531"/>
    </source>
</evidence>
<evidence type="ECO:0000305" key="2"/>
<accession>Q2NFW0</accession>
<sequence length="136" mass="15750">MARKIFKFRGYTLEELQEMSLDEVIELLPSRQRRSLKRGFLPRQEKVLDKMEKVKDMKNDSGRPIVIKTHCRDMIVLPNMVGYTFGIYNGQEFVEVTIQPEMIGCYFGEFAQTRGRVQHGDPGMGATRSSMFVPLK</sequence>
<proteinExistence type="inferred from homology"/>
<dbReference type="EMBL" id="CP000102">
    <property type="protein sequence ID" value="ABC57293.1"/>
    <property type="molecule type" value="Genomic_DNA"/>
</dbReference>
<dbReference type="RefSeq" id="WP_011406492.1">
    <property type="nucleotide sequence ID" value="NC_007681.1"/>
</dbReference>
<dbReference type="SMR" id="Q2NFW0"/>
<dbReference type="STRING" id="339860.Msp_0905"/>
<dbReference type="KEGG" id="mst:Msp_0905"/>
<dbReference type="eggNOG" id="arCOG04099">
    <property type="taxonomic scope" value="Archaea"/>
</dbReference>
<dbReference type="HOGENOM" id="CLU_097347_1_1_2"/>
<dbReference type="OrthoDB" id="30559at2157"/>
<dbReference type="Proteomes" id="UP000001931">
    <property type="component" value="Chromosome"/>
</dbReference>
<dbReference type="GO" id="GO:0022627">
    <property type="term" value="C:cytosolic small ribosomal subunit"/>
    <property type="evidence" value="ECO:0007669"/>
    <property type="project" value="TreeGrafter"/>
</dbReference>
<dbReference type="GO" id="GO:0019843">
    <property type="term" value="F:rRNA binding"/>
    <property type="evidence" value="ECO:0007669"/>
    <property type="project" value="UniProtKB-UniRule"/>
</dbReference>
<dbReference type="GO" id="GO:0003735">
    <property type="term" value="F:structural constituent of ribosome"/>
    <property type="evidence" value="ECO:0007669"/>
    <property type="project" value="InterPro"/>
</dbReference>
<dbReference type="GO" id="GO:0000028">
    <property type="term" value="P:ribosomal small subunit assembly"/>
    <property type="evidence" value="ECO:0007669"/>
    <property type="project" value="TreeGrafter"/>
</dbReference>
<dbReference type="GO" id="GO:0006412">
    <property type="term" value="P:translation"/>
    <property type="evidence" value="ECO:0007669"/>
    <property type="project" value="UniProtKB-UniRule"/>
</dbReference>
<dbReference type="FunFam" id="3.30.860.10:FF:000002">
    <property type="entry name" value="40S ribosomal protein S15"/>
    <property type="match status" value="1"/>
</dbReference>
<dbReference type="Gene3D" id="3.30.860.10">
    <property type="entry name" value="30s Ribosomal Protein S19, Chain A"/>
    <property type="match status" value="1"/>
</dbReference>
<dbReference type="HAMAP" id="MF_00531">
    <property type="entry name" value="Ribosomal_uS19"/>
    <property type="match status" value="1"/>
</dbReference>
<dbReference type="InterPro" id="IPR002222">
    <property type="entry name" value="Ribosomal_uS19"/>
</dbReference>
<dbReference type="InterPro" id="IPR020934">
    <property type="entry name" value="Ribosomal_uS19_CS"/>
</dbReference>
<dbReference type="InterPro" id="IPR005713">
    <property type="entry name" value="Ribosomal_uS19_euk/arc"/>
</dbReference>
<dbReference type="InterPro" id="IPR023575">
    <property type="entry name" value="Ribosomal_uS19_SF"/>
</dbReference>
<dbReference type="NCBIfam" id="NF003121">
    <property type="entry name" value="PRK04038.1"/>
    <property type="match status" value="1"/>
</dbReference>
<dbReference type="NCBIfam" id="TIGR01025">
    <property type="entry name" value="uS19_arch"/>
    <property type="match status" value="1"/>
</dbReference>
<dbReference type="PANTHER" id="PTHR11880">
    <property type="entry name" value="RIBOSOMAL PROTEIN S19P FAMILY MEMBER"/>
    <property type="match status" value="1"/>
</dbReference>
<dbReference type="PANTHER" id="PTHR11880:SF2">
    <property type="entry name" value="SMALL RIBOSOMAL SUBUNIT PROTEIN US19"/>
    <property type="match status" value="1"/>
</dbReference>
<dbReference type="Pfam" id="PF00203">
    <property type="entry name" value="Ribosomal_S19"/>
    <property type="match status" value="1"/>
</dbReference>
<dbReference type="PIRSF" id="PIRSF002144">
    <property type="entry name" value="Ribosomal_S19"/>
    <property type="match status" value="1"/>
</dbReference>
<dbReference type="PRINTS" id="PR00975">
    <property type="entry name" value="RIBOSOMALS19"/>
</dbReference>
<dbReference type="SUPFAM" id="SSF54570">
    <property type="entry name" value="Ribosomal protein S19"/>
    <property type="match status" value="1"/>
</dbReference>
<dbReference type="PROSITE" id="PS00323">
    <property type="entry name" value="RIBOSOMAL_S19"/>
    <property type="match status" value="1"/>
</dbReference>
<organism>
    <name type="scientific">Methanosphaera stadtmanae (strain ATCC 43021 / DSM 3091 / JCM 11832 / MCB-3)</name>
    <dbReference type="NCBI Taxonomy" id="339860"/>
    <lineage>
        <taxon>Archaea</taxon>
        <taxon>Methanobacteriati</taxon>
        <taxon>Methanobacteriota</taxon>
        <taxon>Methanomada group</taxon>
        <taxon>Methanobacteria</taxon>
        <taxon>Methanobacteriales</taxon>
        <taxon>Methanobacteriaceae</taxon>
        <taxon>Methanosphaera</taxon>
    </lineage>
</organism>
<feature type="chain" id="PRO_0000265472" description="Small ribosomal subunit protein uS19">
    <location>
        <begin position="1"/>
        <end position="136"/>
    </location>
</feature>
<gene>
    <name evidence="1" type="primary">rps19</name>
    <name type="ordered locus">Msp_0905</name>
</gene>
<protein>
    <recommendedName>
        <fullName evidence="1">Small ribosomal subunit protein uS19</fullName>
    </recommendedName>
    <alternativeName>
        <fullName evidence="2">30S ribosomal protein S19</fullName>
    </alternativeName>
</protein>
<comment type="function">
    <text evidence="1">Protein S19 forms a complex with S13 that binds strongly to the 16S ribosomal RNA.</text>
</comment>
<comment type="similarity">
    <text evidence="1">Belongs to the universal ribosomal protein uS19 family.</text>
</comment>
<reference key="1">
    <citation type="journal article" date="2006" name="J. Bacteriol.">
        <title>The genome sequence of Methanosphaera stadtmanae reveals why this human intestinal archaeon is restricted to methanol and H2 for methane formation and ATP synthesis.</title>
        <authorList>
            <person name="Fricke W.F."/>
            <person name="Seedorf H."/>
            <person name="Henne A."/>
            <person name="Kruer M."/>
            <person name="Liesegang H."/>
            <person name="Hedderich R."/>
            <person name="Gottschalk G."/>
            <person name="Thauer R.K."/>
        </authorList>
    </citation>
    <scope>NUCLEOTIDE SEQUENCE [LARGE SCALE GENOMIC DNA]</scope>
    <source>
        <strain>ATCC 43021 / DSM 3091 / JCM 11832 / MCB-3</strain>
    </source>
</reference>